<comment type="similarity">
    <text evidence="2">Belongs to the bacterial ribosomal protein bL32 family.</text>
</comment>
<name>RL32_MYCLE</name>
<organism>
    <name type="scientific">Mycobacterium leprae (strain TN)</name>
    <dbReference type="NCBI Taxonomy" id="272631"/>
    <lineage>
        <taxon>Bacteria</taxon>
        <taxon>Bacillati</taxon>
        <taxon>Actinomycetota</taxon>
        <taxon>Actinomycetes</taxon>
        <taxon>Mycobacteriales</taxon>
        <taxon>Mycobacteriaceae</taxon>
        <taxon>Mycobacterium</taxon>
    </lineage>
</organism>
<protein>
    <recommendedName>
        <fullName evidence="2">Large ribosomal subunit protein bL32</fullName>
    </recommendedName>
    <alternativeName>
        <fullName>50S ribosomal protein L32</fullName>
    </alternativeName>
</protein>
<reference key="1">
    <citation type="journal article" date="2001" name="Nature">
        <title>Massive gene decay in the leprosy bacillus.</title>
        <authorList>
            <person name="Cole S.T."/>
            <person name="Eiglmeier K."/>
            <person name="Parkhill J."/>
            <person name="James K.D."/>
            <person name="Thomson N.R."/>
            <person name="Wheeler P.R."/>
            <person name="Honore N."/>
            <person name="Garnier T."/>
            <person name="Churcher C.M."/>
            <person name="Harris D.E."/>
            <person name="Mungall K.L."/>
            <person name="Basham D."/>
            <person name="Brown D."/>
            <person name="Chillingworth T."/>
            <person name="Connor R."/>
            <person name="Davies R.M."/>
            <person name="Devlin K."/>
            <person name="Duthoy S."/>
            <person name="Feltwell T."/>
            <person name="Fraser A."/>
            <person name="Hamlin N."/>
            <person name="Holroyd S."/>
            <person name="Hornsby T."/>
            <person name="Jagels K."/>
            <person name="Lacroix C."/>
            <person name="Maclean J."/>
            <person name="Moule S."/>
            <person name="Murphy L.D."/>
            <person name="Oliver K."/>
            <person name="Quail M.A."/>
            <person name="Rajandream M.A."/>
            <person name="Rutherford K.M."/>
            <person name="Rutter S."/>
            <person name="Seeger K."/>
            <person name="Simon S."/>
            <person name="Simmonds M."/>
            <person name="Skelton J."/>
            <person name="Squares R."/>
            <person name="Squares S."/>
            <person name="Stevens K."/>
            <person name="Taylor K."/>
            <person name="Whitehead S."/>
            <person name="Woodward J.R."/>
            <person name="Barrell B.G."/>
        </authorList>
    </citation>
    <scope>NUCLEOTIDE SEQUENCE [LARGE SCALE GENOMIC DNA]</scope>
    <source>
        <strain>TN</strain>
    </source>
</reference>
<proteinExistence type="inferred from homology"/>
<dbReference type="EMBL" id="AL583917">
    <property type="protein sequence ID" value="CAC29681.1"/>
    <property type="molecule type" value="Genomic_DNA"/>
</dbReference>
<dbReference type="PIR" id="E86930">
    <property type="entry name" value="E86930"/>
</dbReference>
<dbReference type="RefSeq" id="NP_301249.1">
    <property type="nucleotide sequence ID" value="NC_002677.1"/>
</dbReference>
<dbReference type="RefSeq" id="WP_010907574.1">
    <property type="nucleotide sequence ID" value="NC_002677.1"/>
</dbReference>
<dbReference type="SMR" id="Q9CD69"/>
<dbReference type="STRING" id="272631.gene:17573988"/>
<dbReference type="KEGG" id="mle:ML0173"/>
<dbReference type="PATRIC" id="fig|272631.5.peg.278"/>
<dbReference type="Leproma" id="ML0173"/>
<dbReference type="eggNOG" id="ENOG5033AVR">
    <property type="taxonomic scope" value="Bacteria"/>
</dbReference>
<dbReference type="HOGENOM" id="CLU_203263_0_0_11"/>
<dbReference type="OrthoDB" id="9807363at2"/>
<dbReference type="Proteomes" id="UP000000806">
    <property type="component" value="Chromosome"/>
</dbReference>
<dbReference type="GO" id="GO:0015934">
    <property type="term" value="C:large ribosomal subunit"/>
    <property type="evidence" value="ECO:0007669"/>
    <property type="project" value="InterPro"/>
</dbReference>
<dbReference type="GO" id="GO:0003735">
    <property type="term" value="F:structural constituent of ribosome"/>
    <property type="evidence" value="ECO:0007669"/>
    <property type="project" value="InterPro"/>
</dbReference>
<dbReference type="GO" id="GO:0006412">
    <property type="term" value="P:translation"/>
    <property type="evidence" value="ECO:0007669"/>
    <property type="project" value="UniProtKB-UniRule"/>
</dbReference>
<dbReference type="HAMAP" id="MF_00340">
    <property type="entry name" value="Ribosomal_bL32"/>
    <property type="match status" value="1"/>
</dbReference>
<dbReference type="InterPro" id="IPR002677">
    <property type="entry name" value="Ribosomal_bL32"/>
</dbReference>
<dbReference type="InterPro" id="IPR011332">
    <property type="entry name" value="Ribosomal_zn-bd"/>
</dbReference>
<dbReference type="NCBIfam" id="TIGR01031">
    <property type="entry name" value="rpmF_bact"/>
    <property type="match status" value="1"/>
</dbReference>
<dbReference type="Pfam" id="PF01783">
    <property type="entry name" value="Ribosomal_L32p"/>
    <property type="match status" value="1"/>
</dbReference>
<dbReference type="SUPFAM" id="SSF57829">
    <property type="entry name" value="Zn-binding ribosomal proteins"/>
    <property type="match status" value="1"/>
</dbReference>
<sequence length="57" mass="6578">MATPKRRMSRANTRSRRAQWKAARTELVGVTVAGQRHKVPRRLLKAARLGLIDLDRR</sequence>
<evidence type="ECO:0000256" key="1">
    <source>
        <dbReference type="SAM" id="MobiDB-lite"/>
    </source>
</evidence>
<evidence type="ECO:0000305" key="2"/>
<feature type="chain" id="PRO_0000172372" description="Large ribosomal subunit protein bL32">
    <location>
        <begin position="1"/>
        <end position="57"/>
    </location>
</feature>
<feature type="region of interest" description="Disordered" evidence="1">
    <location>
        <begin position="1"/>
        <end position="20"/>
    </location>
</feature>
<feature type="compositionally biased region" description="Basic residues" evidence="1">
    <location>
        <begin position="1"/>
        <end position="19"/>
    </location>
</feature>
<keyword id="KW-1185">Reference proteome</keyword>
<keyword id="KW-0687">Ribonucleoprotein</keyword>
<keyword id="KW-0689">Ribosomal protein</keyword>
<accession>Q9CD69</accession>
<gene>
    <name type="primary">rpmF</name>
    <name type="ordered locus">ML0173</name>
</gene>